<keyword id="KW-0007">Acetylation</keyword>
<keyword id="KW-0963">Cytoplasm</keyword>
<keyword id="KW-0271">Exosome</keyword>
<keyword id="KW-1017">Isopeptide bond</keyword>
<keyword id="KW-0539">Nucleus</keyword>
<keyword id="KW-0597">Phosphoprotein</keyword>
<keyword id="KW-1185">Reference proteome</keyword>
<keyword id="KW-0694">RNA-binding</keyword>
<keyword id="KW-0698">rRNA processing</keyword>
<keyword id="KW-0832">Ubl conjugation</keyword>
<comment type="function">
    <text evidence="1">Non-catalytic component of the RNA exosome complex which has 3'-&gt;5' exoribonuclease activity and participates in a multitude of cellular RNA processing and degradation events. In the nucleus, the RNA exosome complex is involved in proper maturation of stable RNA species such as rRNA, snRNA and snoRNA, in the elimination of RNA processing by-products and non-coding 'pervasive' transcripts, such as antisense RNA species and promoter-upstream transcripts (PROMPTs), and of mRNAs with processing defects, thereby limiting or excluding their export to the cytoplasm. The RNA exosome may be involved in Ig class switch recombination (CSR) and/or Ig variable region somatic hypermutation (SHM) by targeting AICDA deamination activity to transcribed dsDNA substrates. In the cytoplasm, the RNA exosome complex is involved in general mRNA turnover and specifically degrades inherently unstable mRNAs containing AU-rich elements (AREs) within their 3' untranslated regions, and in RNA surveillance pathways, preventing translation of aberrant mRNAs. It seems to be involved in degradation of histone mRNA. The catalytic inactive RNA exosome core complex of 9 subunits (Exo-9) is proposed to play a pivotal role in the binding and presentation of RNA for ribonucleolysis, and to serve as a scaffold for the association with catalytic subunits and accessory proteins or complexes. EXOSC9 binds to ARE-containing RNAs (By similarity).</text>
</comment>
<comment type="subunit">
    <text evidence="1">Component of the RNA exosome core complex (Exo-9), composed of EXOSC1, EXOSC2, EXOSC3, EXOSC4, EXOSC5, EXOSC6, EXOSC7, EXOSC8 and EXOSC9; within the complex interacts with EXOSC3, EXOSC4, EXOSC5 and DIS3 (By similarity). The catalytically inactive RNA exosome core complex (Exo-9) associates with the catalytic subunit EXOSC10/RRP6 (By similarity). Exo-9 may associate with DIS3 to form the nucleolar exosome complex, or DIS3L to form the cytoplasmic exosome complex (By similarity). Exo-9 is formed by a hexameric base ring consisting of the heterodimers EXOSC4-EXOSC9, EXOSC5-EXOSC8 and EXOSC6-EXOSC7, and a cap ring consisting of EXOSC1, EXOSC2 and EXOSC3 (By similarity). The RNA exosome complex associates with cofactors C1D/RRP47, MPHOSPH6/MPP6 and MTREX/MTR4 (By similarity). Interacts (via C-terminus region) with SETX (via N-terminus domain); the interaction enhances SETX sumoylation (By similarity). Interacts with DIS3; the interaction is direct (By similarity).</text>
</comment>
<comment type="subcellular location">
    <subcellularLocation>
        <location evidence="1">Cytoplasm</location>
    </subcellularLocation>
    <subcellularLocation>
        <location evidence="1">Nucleus</location>
        <location evidence="1">Nucleolus</location>
    </subcellularLocation>
    <subcellularLocation>
        <location evidence="1">Nucleus</location>
    </subcellularLocation>
    <subcellularLocation>
        <location evidence="1">Nucleus</location>
        <location evidence="1">Nucleoplasm</location>
    </subcellularLocation>
    <text evidence="1">Colocalizes with SETX in nuclear foci upon induction of transcription-related DNA damage at the S phase (By similarity).</text>
</comment>
<comment type="similarity">
    <text evidence="3">Belongs to the RNase PH family.</text>
</comment>
<comment type="caution">
    <text evidence="3">The six exosome core subunits containing a RNase PH-domain are not phosphorolytically active.</text>
</comment>
<gene>
    <name type="primary">Exosc9</name>
</gene>
<sequence length="437" mass="48882">MKETPLSNCERRFLLRAIEEKKRLDGRQTYDYRNIRISFGTDYGCCIVELGKTRVLGQVSCELVSPKLNRATEGILFFNLELSQMAAPAFEPGRQSDLLVKLNRLLERCLRNSKCIDTESLCVVAGEKVWQIRVDLHLLNHDGNIIDAASIAAIVALCHFRRPDVSVQGEEVTLYTPEERDPVPLSIHHMPICVSFAFFQQGTYLLVDPNEREERVMDGLLVIAMNKHREICTIQSSGGIMLLKDQVFRCSKIAGVKVAEITELIQKALENDQRVRKEGGKFGFAESIANQRITAFKMEKAPIDTSNIEEKAEEIIAEAEPPPEVVSKPVLWTPGTAQIGEGIENSWGDLEDSEKEEEEEGGIDETVILDDTKMDTGEVSDIGSQGAPIVLSDSEEEEMIILEPEKSPKKIRAQTSANQKAPSKSQGKRRKKKRTAN</sequence>
<name>EXOS9_RAT</name>
<evidence type="ECO:0000250" key="1">
    <source>
        <dbReference type="UniProtKB" id="Q06265"/>
    </source>
</evidence>
<evidence type="ECO:0000256" key="2">
    <source>
        <dbReference type="SAM" id="MobiDB-lite"/>
    </source>
</evidence>
<evidence type="ECO:0000305" key="3"/>
<evidence type="ECO:0007744" key="4">
    <source>
    </source>
</evidence>
<reference key="1">
    <citation type="journal article" date="2004" name="Genome Res.">
        <title>The status, quality, and expansion of the NIH full-length cDNA project: the Mammalian Gene Collection (MGC).</title>
        <authorList>
            <consortium name="The MGC Project Team"/>
        </authorList>
    </citation>
    <scope>NUCLEOTIDE SEQUENCE [LARGE SCALE MRNA]</scope>
    <source>
        <tissue>Testis</tissue>
    </source>
</reference>
<reference key="2">
    <citation type="journal article" date="2012" name="Nat. Commun.">
        <title>Quantitative maps of protein phosphorylation sites across 14 different rat organs and tissues.</title>
        <authorList>
            <person name="Lundby A."/>
            <person name="Secher A."/>
            <person name="Lage K."/>
            <person name="Nordsborg N.B."/>
            <person name="Dmytriyev A."/>
            <person name="Lundby C."/>
            <person name="Olsen J.V."/>
        </authorList>
    </citation>
    <scope>PHOSPHORYLATION [LARGE SCALE ANALYSIS] AT SER-392; SER-394 AND SER-407</scope>
    <scope>IDENTIFICATION BY MASS SPECTROMETRY [LARGE SCALE ANALYSIS]</scope>
</reference>
<organism>
    <name type="scientific">Rattus norvegicus</name>
    <name type="common">Rat</name>
    <dbReference type="NCBI Taxonomy" id="10116"/>
    <lineage>
        <taxon>Eukaryota</taxon>
        <taxon>Metazoa</taxon>
        <taxon>Chordata</taxon>
        <taxon>Craniata</taxon>
        <taxon>Vertebrata</taxon>
        <taxon>Euteleostomi</taxon>
        <taxon>Mammalia</taxon>
        <taxon>Eutheria</taxon>
        <taxon>Euarchontoglires</taxon>
        <taxon>Glires</taxon>
        <taxon>Rodentia</taxon>
        <taxon>Myomorpha</taxon>
        <taxon>Muroidea</taxon>
        <taxon>Muridae</taxon>
        <taxon>Murinae</taxon>
        <taxon>Rattus</taxon>
    </lineage>
</organism>
<protein>
    <recommendedName>
        <fullName>Exosome complex component RRP45</fullName>
    </recommendedName>
    <alternativeName>
        <fullName>Exosome component 9</fullName>
    </alternativeName>
</protein>
<feature type="chain" id="PRO_0000287543" description="Exosome complex component RRP45">
    <location>
        <begin position="1"/>
        <end position="437"/>
    </location>
</feature>
<feature type="region of interest" description="Disordered" evidence="2">
    <location>
        <begin position="339"/>
        <end position="437"/>
    </location>
</feature>
<feature type="compositionally biased region" description="Acidic residues" evidence="2">
    <location>
        <begin position="349"/>
        <end position="363"/>
    </location>
</feature>
<feature type="compositionally biased region" description="Polar residues" evidence="2">
    <location>
        <begin position="413"/>
        <end position="425"/>
    </location>
</feature>
<feature type="compositionally biased region" description="Basic residues" evidence="2">
    <location>
        <begin position="426"/>
        <end position="437"/>
    </location>
</feature>
<feature type="modified residue" description="Phosphoserine" evidence="1">
    <location>
        <position position="65"/>
    </location>
</feature>
<feature type="modified residue" description="N6-acetyllysine; alternate" evidence="1">
    <location>
        <position position="297"/>
    </location>
</feature>
<feature type="modified residue" description="Phosphoserine" evidence="1">
    <location>
        <position position="306"/>
    </location>
</feature>
<feature type="modified residue" description="Phosphoserine" evidence="1">
    <location>
        <position position="346"/>
    </location>
</feature>
<feature type="modified residue" description="Phosphoserine" evidence="4">
    <location>
        <position position="392"/>
    </location>
</feature>
<feature type="modified residue" description="Phosphoserine" evidence="4">
    <location>
        <position position="394"/>
    </location>
</feature>
<feature type="modified residue" description="Phosphoserine" evidence="4">
    <location>
        <position position="407"/>
    </location>
</feature>
<feature type="cross-link" description="Glycyl lysine isopeptide (Lys-Gly) (interchain with G-Cter in SUMO1); alternate" evidence="1">
    <location>
        <position position="297"/>
    </location>
</feature>
<feature type="cross-link" description="Glycyl lysine isopeptide (Lys-Gly) (interchain with G-Cter in SUMO2); alternate" evidence="1">
    <location>
        <position position="297"/>
    </location>
</feature>
<dbReference type="EMBL" id="BC097413">
    <property type="protein sequence ID" value="AAH97413.1"/>
    <property type="molecule type" value="mRNA"/>
</dbReference>
<dbReference type="RefSeq" id="NP_001020577.1">
    <property type="nucleotide sequence ID" value="NM_001025406.1"/>
</dbReference>
<dbReference type="SMR" id="Q4QR75"/>
<dbReference type="BioGRID" id="254846">
    <property type="interactions" value="1"/>
</dbReference>
<dbReference type="FunCoup" id="Q4QR75">
    <property type="interactions" value="3265"/>
</dbReference>
<dbReference type="STRING" id="10116.ENSRNOP00000020662"/>
<dbReference type="iPTMnet" id="Q4QR75"/>
<dbReference type="PhosphoSitePlus" id="Q4QR75"/>
<dbReference type="jPOST" id="Q4QR75"/>
<dbReference type="PaxDb" id="10116-ENSRNOP00000020662"/>
<dbReference type="Ensembl" id="ENSRNOT00000020662.7">
    <property type="protein sequence ID" value="ENSRNOP00000020662.4"/>
    <property type="gene ID" value="ENSRNOG00000014674.8"/>
</dbReference>
<dbReference type="GeneID" id="294975"/>
<dbReference type="KEGG" id="rno:294975"/>
<dbReference type="UCSC" id="RGD:1307888">
    <property type="organism name" value="rat"/>
</dbReference>
<dbReference type="AGR" id="RGD:1307888"/>
<dbReference type="CTD" id="5393"/>
<dbReference type="RGD" id="1307888">
    <property type="gene designation" value="Exosc9"/>
</dbReference>
<dbReference type="eggNOG" id="KOG1614">
    <property type="taxonomic scope" value="Eukaryota"/>
</dbReference>
<dbReference type="GeneTree" id="ENSGT00950000183130"/>
<dbReference type="HOGENOM" id="CLU_038194_7_0_1"/>
<dbReference type="InParanoid" id="Q4QR75"/>
<dbReference type="OMA" id="GPQFENG"/>
<dbReference type="OrthoDB" id="10264038at2759"/>
<dbReference type="PhylomeDB" id="Q4QR75"/>
<dbReference type="TreeFam" id="TF300092"/>
<dbReference type="Reactome" id="R-RNO-429958">
    <property type="pathway name" value="mRNA decay by 3' to 5' exoribonuclease"/>
</dbReference>
<dbReference type="Reactome" id="R-RNO-450385">
    <property type="pathway name" value="Butyrate Response Factor 1 (BRF1) binds and destabilizes mRNA"/>
</dbReference>
<dbReference type="Reactome" id="R-RNO-450513">
    <property type="pathway name" value="Tristetraprolin (TTP, ZFP36) binds and destabilizes mRNA"/>
</dbReference>
<dbReference type="Reactome" id="R-RNO-450604">
    <property type="pathway name" value="KSRP (KHSRP) binds and destabilizes mRNA"/>
</dbReference>
<dbReference type="Reactome" id="R-RNO-6791226">
    <property type="pathway name" value="Major pathway of rRNA processing in the nucleolus and cytosol"/>
</dbReference>
<dbReference type="PRO" id="PR:Q4QR75"/>
<dbReference type="Proteomes" id="UP000002494">
    <property type="component" value="Chromosome 2"/>
</dbReference>
<dbReference type="Bgee" id="ENSRNOG00000014674">
    <property type="expression patterns" value="Expressed in thymus and 20 other cell types or tissues"/>
</dbReference>
<dbReference type="ExpressionAtlas" id="Q4QR75">
    <property type="expression patterns" value="baseline and differential"/>
</dbReference>
<dbReference type="GO" id="GO:0005737">
    <property type="term" value="C:cytoplasm"/>
    <property type="evidence" value="ECO:0000266"/>
    <property type="project" value="RGD"/>
</dbReference>
<dbReference type="GO" id="GO:0000177">
    <property type="term" value="C:cytoplasmic exosome (RNase complex)"/>
    <property type="evidence" value="ECO:0000318"/>
    <property type="project" value="GO_Central"/>
</dbReference>
<dbReference type="GO" id="GO:0005829">
    <property type="term" value="C:cytosol"/>
    <property type="evidence" value="ECO:0000266"/>
    <property type="project" value="RGD"/>
</dbReference>
<dbReference type="GO" id="GO:0000178">
    <property type="term" value="C:exosome (RNase complex)"/>
    <property type="evidence" value="ECO:0000250"/>
    <property type="project" value="UniProtKB"/>
</dbReference>
<dbReference type="GO" id="GO:0000228">
    <property type="term" value="C:nuclear chromosome"/>
    <property type="evidence" value="ECO:0000250"/>
    <property type="project" value="UniProtKB"/>
</dbReference>
<dbReference type="GO" id="GO:0000176">
    <property type="term" value="C:nuclear exosome (RNase complex)"/>
    <property type="evidence" value="ECO:0000266"/>
    <property type="project" value="RGD"/>
</dbReference>
<dbReference type="GO" id="GO:0005730">
    <property type="term" value="C:nucleolus"/>
    <property type="evidence" value="ECO:0000250"/>
    <property type="project" value="UniProtKB"/>
</dbReference>
<dbReference type="GO" id="GO:0005654">
    <property type="term" value="C:nucleoplasm"/>
    <property type="evidence" value="ECO:0000250"/>
    <property type="project" value="UniProtKB"/>
</dbReference>
<dbReference type="GO" id="GO:0005634">
    <property type="term" value="C:nucleus"/>
    <property type="evidence" value="ECO:0000266"/>
    <property type="project" value="RGD"/>
</dbReference>
<dbReference type="GO" id="GO:0035925">
    <property type="term" value="F:mRNA 3'-UTR AU-rich region binding"/>
    <property type="evidence" value="ECO:0000266"/>
    <property type="project" value="RGD"/>
</dbReference>
<dbReference type="GO" id="GO:0061629">
    <property type="term" value="F:RNA polymerase II-specific DNA-binding transcription factor binding"/>
    <property type="evidence" value="ECO:0000353"/>
    <property type="project" value="RGD"/>
</dbReference>
<dbReference type="GO" id="GO:0000467">
    <property type="term" value="P:exonucleolytic trimming to generate mature 3'-end of 5.8S rRNA from tricistronic rRNA transcript (SSU-rRNA, 5.8S rRNA, LSU-rRNA)"/>
    <property type="evidence" value="ECO:0000318"/>
    <property type="project" value="GO_Central"/>
</dbReference>
<dbReference type="GO" id="GO:0006402">
    <property type="term" value="P:mRNA catabolic process"/>
    <property type="evidence" value="ECO:0000266"/>
    <property type="project" value="RGD"/>
</dbReference>
<dbReference type="GO" id="GO:0071028">
    <property type="term" value="P:nuclear mRNA surveillance"/>
    <property type="evidence" value="ECO:0000266"/>
    <property type="project" value="RGD"/>
</dbReference>
<dbReference type="GO" id="GO:0071035">
    <property type="term" value="P:nuclear polyadenylation-dependent rRNA catabolic process"/>
    <property type="evidence" value="ECO:0000266"/>
    <property type="project" value="RGD"/>
</dbReference>
<dbReference type="GO" id="GO:0000956">
    <property type="term" value="P:nuclear-transcribed mRNA catabolic process"/>
    <property type="evidence" value="ECO:0000266"/>
    <property type="project" value="RGD"/>
</dbReference>
<dbReference type="GO" id="GO:0030307">
    <property type="term" value="P:positive regulation of cell growth"/>
    <property type="evidence" value="ECO:0000266"/>
    <property type="project" value="RGD"/>
</dbReference>
<dbReference type="GO" id="GO:0045944">
    <property type="term" value="P:positive regulation of transcription by RNA polymerase II"/>
    <property type="evidence" value="ECO:0000314"/>
    <property type="project" value="RGD"/>
</dbReference>
<dbReference type="GO" id="GO:0006401">
    <property type="term" value="P:RNA catabolic process"/>
    <property type="evidence" value="ECO:0000266"/>
    <property type="project" value="RGD"/>
</dbReference>
<dbReference type="GO" id="GO:0006396">
    <property type="term" value="P:RNA processing"/>
    <property type="evidence" value="ECO:0000266"/>
    <property type="project" value="RGD"/>
</dbReference>
<dbReference type="GO" id="GO:0016075">
    <property type="term" value="P:rRNA catabolic process"/>
    <property type="evidence" value="ECO:0000318"/>
    <property type="project" value="GO_Central"/>
</dbReference>
<dbReference type="GO" id="GO:0071038">
    <property type="term" value="P:TRAMP-dependent tRNA surveillance pathway"/>
    <property type="evidence" value="ECO:0000318"/>
    <property type="project" value="GO_Central"/>
</dbReference>
<dbReference type="GO" id="GO:0034473">
    <property type="term" value="P:U1 snRNA 3'-end processing"/>
    <property type="evidence" value="ECO:0000318"/>
    <property type="project" value="GO_Central"/>
</dbReference>
<dbReference type="GO" id="GO:0034475">
    <property type="term" value="P:U4 snRNA 3'-end processing"/>
    <property type="evidence" value="ECO:0000318"/>
    <property type="project" value="GO_Central"/>
</dbReference>
<dbReference type="GO" id="GO:0034476">
    <property type="term" value="P:U5 snRNA 3'-end processing"/>
    <property type="evidence" value="ECO:0000318"/>
    <property type="project" value="GO_Central"/>
</dbReference>
<dbReference type="CDD" id="cd11368">
    <property type="entry name" value="RNase_PH_RRP45"/>
    <property type="match status" value="1"/>
</dbReference>
<dbReference type="FunFam" id="3.30.230.70:FF:000005">
    <property type="entry name" value="Exosome complex component RRP45"/>
    <property type="match status" value="1"/>
</dbReference>
<dbReference type="Gene3D" id="3.30.230.70">
    <property type="entry name" value="GHMP Kinase, N-terminal domain"/>
    <property type="match status" value="1"/>
</dbReference>
<dbReference type="InterPro" id="IPR001247">
    <property type="entry name" value="ExoRNase_PH_dom1"/>
</dbReference>
<dbReference type="InterPro" id="IPR015847">
    <property type="entry name" value="ExoRNase_PH_dom2"/>
</dbReference>
<dbReference type="InterPro" id="IPR036345">
    <property type="entry name" value="ExoRNase_PH_dom2_sf"/>
</dbReference>
<dbReference type="InterPro" id="IPR050590">
    <property type="entry name" value="Exosome_comp_Rrp42_subfam"/>
</dbReference>
<dbReference type="InterPro" id="IPR027408">
    <property type="entry name" value="PNPase/RNase_PH_dom_sf"/>
</dbReference>
<dbReference type="InterPro" id="IPR020568">
    <property type="entry name" value="Ribosomal_Su5_D2-typ_SF"/>
</dbReference>
<dbReference type="InterPro" id="IPR033100">
    <property type="entry name" value="Rrp45"/>
</dbReference>
<dbReference type="PANTHER" id="PTHR11097:SF14">
    <property type="entry name" value="EXOSOME COMPLEX COMPONENT RRP45"/>
    <property type="match status" value="1"/>
</dbReference>
<dbReference type="PANTHER" id="PTHR11097">
    <property type="entry name" value="EXOSOME COMPLEX EXONUCLEASE RIBOSOMAL RNA PROCESSING PROTEIN"/>
    <property type="match status" value="1"/>
</dbReference>
<dbReference type="Pfam" id="PF01138">
    <property type="entry name" value="RNase_PH"/>
    <property type="match status" value="1"/>
</dbReference>
<dbReference type="Pfam" id="PF03725">
    <property type="entry name" value="RNase_PH_C"/>
    <property type="match status" value="1"/>
</dbReference>
<dbReference type="SUPFAM" id="SSF55666">
    <property type="entry name" value="Ribonuclease PH domain 2-like"/>
    <property type="match status" value="1"/>
</dbReference>
<dbReference type="SUPFAM" id="SSF54211">
    <property type="entry name" value="Ribosomal protein S5 domain 2-like"/>
    <property type="match status" value="1"/>
</dbReference>
<proteinExistence type="evidence at protein level"/>
<accession>Q4QR75</accession>